<gene>
    <name evidence="1" type="primary">apt</name>
    <name type="ordered locus">Minf_0226</name>
</gene>
<dbReference type="EC" id="2.4.2.7" evidence="1"/>
<dbReference type="EMBL" id="CP000975">
    <property type="protein sequence ID" value="ACD82286.1"/>
    <property type="molecule type" value="Genomic_DNA"/>
</dbReference>
<dbReference type="RefSeq" id="WP_012462568.1">
    <property type="nucleotide sequence ID" value="NC_010794.1"/>
</dbReference>
<dbReference type="SMR" id="B3DXQ2"/>
<dbReference type="STRING" id="481448.Minf_0226"/>
<dbReference type="KEGG" id="min:Minf_0226"/>
<dbReference type="eggNOG" id="COG0503">
    <property type="taxonomic scope" value="Bacteria"/>
</dbReference>
<dbReference type="HOGENOM" id="CLU_063339_3_0_0"/>
<dbReference type="OrthoDB" id="9803963at2"/>
<dbReference type="UniPathway" id="UPA00588">
    <property type="reaction ID" value="UER00646"/>
</dbReference>
<dbReference type="Proteomes" id="UP000009149">
    <property type="component" value="Chromosome"/>
</dbReference>
<dbReference type="GO" id="GO:0005737">
    <property type="term" value="C:cytoplasm"/>
    <property type="evidence" value="ECO:0007669"/>
    <property type="project" value="UniProtKB-SubCell"/>
</dbReference>
<dbReference type="GO" id="GO:0002055">
    <property type="term" value="F:adenine binding"/>
    <property type="evidence" value="ECO:0007669"/>
    <property type="project" value="TreeGrafter"/>
</dbReference>
<dbReference type="GO" id="GO:0003999">
    <property type="term" value="F:adenine phosphoribosyltransferase activity"/>
    <property type="evidence" value="ECO:0007669"/>
    <property type="project" value="UniProtKB-UniRule"/>
</dbReference>
<dbReference type="GO" id="GO:0016208">
    <property type="term" value="F:AMP binding"/>
    <property type="evidence" value="ECO:0007669"/>
    <property type="project" value="TreeGrafter"/>
</dbReference>
<dbReference type="GO" id="GO:0006168">
    <property type="term" value="P:adenine salvage"/>
    <property type="evidence" value="ECO:0007669"/>
    <property type="project" value="InterPro"/>
</dbReference>
<dbReference type="GO" id="GO:0044209">
    <property type="term" value="P:AMP salvage"/>
    <property type="evidence" value="ECO:0007669"/>
    <property type="project" value="UniProtKB-UniRule"/>
</dbReference>
<dbReference type="GO" id="GO:0006166">
    <property type="term" value="P:purine ribonucleoside salvage"/>
    <property type="evidence" value="ECO:0007669"/>
    <property type="project" value="UniProtKB-KW"/>
</dbReference>
<dbReference type="CDD" id="cd06223">
    <property type="entry name" value="PRTases_typeI"/>
    <property type="match status" value="1"/>
</dbReference>
<dbReference type="FunFam" id="3.40.50.2020:FF:000021">
    <property type="entry name" value="Adenine phosphoribosyltransferase"/>
    <property type="match status" value="1"/>
</dbReference>
<dbReference type="Gene3D" id="3.40.50.2020">
    <property type="match status" value="1"/>
</dbReference>
<dbReference type="HAMAP" id="MF_00004">
    <property type="entry name" value="Aden_phosphoribosyltr"/>
    <property type="match status" value="1"/>
</dbReference>
<dbReference type="InterPro" id="IPR005764">
    <property type="entry name" value="Ade_phspho_trans"/>
</dbReference>
<dbReference type="InterPro" id="IPR000836">
    <property type="entry name" value="PRibTrfase_dom"/>
</dbReference>
<dbReference type="InterPro" id="IPR029057">
    <property type="entry name" value="PRTase-like"/>
</dbReference>
<dbReference type="InterPro" id="IPR050054">
    <property type="entry name" value="UPRTase/APRTase"/>
</dbReference>
<dbReference type="NCBIfam" id="TIGR01090">
    <property type="entry name" value="apt"/>
    <property type="match status" value="1"/>
</dbReference>
<dbReference type="NCBIfam" id="NF002634">
    <property type="entry name" value="PRK02304.1-3"/>
    <property type="match status" value="1"/>
</dbReference>
<dbReference type="NCBIfam" id="NF002636">
    <property type="entry name" value="PRK02304.1-5"/>
    <property type="match status" value="1"/>
</dbReference>
<dbReference type="PANTHER" id="PTHR32315">
    <property type="entry name" value="ADENINE PHOSPHORIBOSYLTRANSFERASE"/>
    <property type="match status" value="1"/>
</dbReference>
<dbReference type="PANTHER" id="PTHR32315:SF3">
    <property type="entry name" value="ADENINE PHOSPHORIBOSYLTRANSFERASE"/>
    <property type="match status" value="1"/>
</dbReference>
<dbReference type="Pfam" id="PF00156">
    <property type="entry name" value="Pribosyltran"/>
    <property type="match status" value="1"/>
</dbReference>
<dbReference type="SUPFAM" id="SSF53271">
    <property type="entry name" value="PRTase-like"/>
    <property type="match status" value="1"/>
</dbReference>
<dbReference type="PROSITE" id="PS00103">
    <property type="entry name" value="PUR_PYR_PR_TRANSFER"/>
    <property type="match status" value="1"/>
</dbReference>
<comment type="function">
    <text evidence="1">Catalyzes a salvage reaction resulting in the formation of AMP, that is energically less costly than de novo synthesis.</text>
</comment>
<comment type="catalytic activity">
    <reaction evidence="1">
        <text>AMP + diphosphate = 5-phospho-alpha-D-ribose 1-diphosphate + adenine</text>
        <dbReference type="Rhea" id="RHEA:16609"/>
        <dbReference type="ChEBI" id="CHEBI:16708"/>
        <dbReference type="ChEBI" id="CHEBI:33019"/>
        <dbReference type="ChEBI" id="CHEBI:58017"/>
        <dbReference type="ChEBI" id="CHEBI:456215"/>
        <dbReference type="EC" id="2.4.2.7"/>
    </reaction>
</comment>
<comment type="pathway">
    <text evidence="1">Purine metabolism; AMP biosynthesis via salvage pathway; AMP from adenine: step 1/1.</text>
</comment>
<comment type="subunit">
    <text evidence="1">Homodimer.</text>
</comment>
<comment type="subcellular location">
    <subcellularLocation>
        <location evidence="1">Cytoplasm</location>
    </subcellularLocation>
</comment>
<comment type="similarity">
    <text evidence="1">Belongs to the purine/pyrimidine phosphoribosyltransferase family.</text>
</comment>
<organism>
    <name type="scientific">Methylacidiphilum infernorum (isolate V4)</name>
    <name type="common">Methylokorus infernorum (strain V4)</name>
    <dbReference type="NCBI Taxonomy" id="481448"/>
    <lineage>
        <taxon>Bacteria</taxon>
        <taxon>Pseudomonadati</taxon>
        <taxon>Verrucomicrobiota</taxon>
        <taxon>Methylacidiphilae</taxon>
        <taxon>Methylacidiphilales</taxon>
        <taxon>Methylacidiphilaceae</taxon>
        <taxon>Methylacidiphilum (ex Ratnadevi et al. 2023)</taxon>
    </lineage>
</organism>
<keyword id="KW-0963">Cytoplasm</keyword>
<keyword id="KW-0328">Glycosyltransferase</keyword>
<keyword id="KW-0660">Purine salvage</keyword>
<keyword id="KW-0808">Transferase</keyword>
<feature type="chain" id="PRO_1000088984" description="Adenine phosphoribosyltransferase">
    <location>
        <begin position="1"/>
        <end position="179"/>
    </location>
</feature>
<evidence type="ECO:0000255" key="1">
    <source>
        <dbReference type="HAMAP-Rule" id="MF_00004"/>
    </source>
</evidence>
<proteinExistence type="inferred from homology"/>
<name>APT_METI4</name>
<sequence>MTFVLSSSIERLKEKIRTIPDFPRPGVMFKDITPAIGEGQFFRLILTIFIARYQKKKIDKIAAIDARGFIFAGALAHALGVGIIPIRKKGKLPYKTYELHYKSEYGEEVLTIHQDAISKGENILIVDDVLATGNTARTAALLVEKCGGNLMELGFLAELSNLKGRERLFPFPCYSILQF</sequence>
<reference key="1">
    <citation type="journal article" date="2008" name="Biol. Direct">
        <title>Complete genome sequence of the extremely acidophilic methanotroph isolate V4, Methylacidiphilum infernorum, a representative of the bacterial phylum Verrucomicrobia.</title>
        <authorList>
            <person name="Hou S."/>
            <person name="Makarova K.S."/>
            <person name="Saw J.H."/>
            <person name="Senin P."/>
            <person name="Ly B.V."/>
            <person name="Zhou Z."/>
            <person name="Ren Y."/>
            <person name="Wang J."/>
            <person name="Galperin M.Y."/>
            <person name="Omelchenko M.V."/>
            <person name="Wolf Y.I."/>
            <person name="Yutin N."/>
            <person name="Koonin E.V."/>
            <person name="Stott M.B."/>
            <person name="Mountain B.W."/>
            <person name="Crowe M.A."/>
            <person name="Smirnova A.V."/>
            <person name="Dunfield P.F."/>
            <person name="Feng L."/>
            <person name="Wang L."/>
            <person name="Alam M."/>
        </authorList>
    </citation>
    <scope>NUCLEOTIDE SEQUENCE [LARGE SCALE GENOMIC DNA]</scope>
    <source>
        <strain>Isolate V4</strain>
    </source>
</reference>
<accession>B3DXQ2</accession>
<protein>
    <recommendedName>
        <fullName evidence="1">Adenine phosphoribosyltransferase</fullName>
        <shortName evidence="1">APRT</shortName>
        <ecNumber evidence="1">2.4.2.7</ecNumber>
    </recommendedName>
</protein>